<accession>P24412</accession>
<protein>
    <recommendedName>
        <fullName evidence="1">Membrane protein</fullName>
        <shortName evidence="1">M protein</shortName>
    </recommendedName>
    <alternativeName>
        <fullName evidence="1">E1 glycoprotein</fullName>
    </alternativeName>
    <alternativeName>
        <fullName evidence="1">Matrix glycoprotein</fullName>
    </alternativeName>
    <alternativeName>
        <fullName evidence="1">Membrane glycoprotein</fullName>
    </alternativeName>
</protein>
<reference key="1">
    <citation type="journal article" date="1990" name="J. Gen. Virol.">
        <title>Porcine respiratory coronavirus differs from transmissible gastroenteritis virus by a few genomic deletions.</title>
        <authorList>
            <person name="Rasschaert D."/>
            <person name="Duarte M."/>
            <person name="Laude H."/>
        </authorList>
    </citation>
    <scope>NUCLEOTIDE SEQUENCE [GENOMIC RNA]</scope>
</reference>
<organism>
    <name type="scientific">Porcine respiratory coronavirus (strain RM4)</name>
    <name type="common">PRCoV</name>
    <name type="synonym">PRCV</name>
    <dbReference type="NCBI Taxonomy" id="11148"/>
    <lineage>
        <taxon>Viruses</taxon>
        <taxon>Riboviria</taxon>
        <taxon>Orthornavirae</taxon>
        <taxon>Pisuviricota</taxon>
        <taxon>Pisoniviricetes</taxon>
        <taxon>Nidovirales</taxon>
        <taxon>Cornidovirineae</taxon>
        <taxon>Coronaviridae</taxon>
        <taxon>Orthocoronavirinae</taxon>
        <taxon>Alphacoronavirus</taxon>
        <taxon>Tegacovirus</taxon>
        <taxon>Alphacoronavirus 1</taxon>
    </lineage>
</organism>
<name>VME1_CVPRM</name>
<comment type="function">
    <text evidence="1 2">Component of the viral envelope that plays a central role in virus morphogenesis and assembly via its interactions with other viral proteins.</text>
</comment>
<comment type="subunit">
    <text evidence="1 2">Homomultimer. Interacts with envelope E protein in the budding compartment of the host cell, which is located between endoplasmic reticulum and the Golgi complex. Forms a complex with HE and S proteins. Interacts with nucleocapsid N protein. This interaction probably participates in RNA packaging into the virus.</text>
</comment>
<comment type="subcellular location">
    <subcellularLocation>
        <location evidence="1">Virion membrane</location>
        <topology evidence="1">Multi-pass membrane protein</topology>
    </subcellularLocation>
    <subcellularLocation>
        <location evidence="1">Host Golgi apparatus membrane</location>
        <topology evidence="1">Multi-pass membrane protein</topology>
    </subcellularLocation>
    <text evidence="1">Largely embedded in the lipid bilayer.</text>
</comment>
<comment type="similarity">
    <text evidence="1">Belongs to the alphacoronaviruses M protein family.</text>
</comment>
<dbReference type="EMBL" id="Z24675">
    <property type="protein sequence ID" value="CAA80840.1"/>
    <property type="molecule type" value="Genomic_RNA"/>
</dbReference>
<dbReference type="PIR" id="D36607">
    <property type="entry name" value="D36607"/>
</dbReference>
<dbReference type="SMR" id="P24412"/>
<dbReference type="GO" id="GO:0044178">
    <property type="term" value="C:host cell Golgi membrane"/>
    <property type="evidence" value="ECO:0007669"/>
    <property type="project" value="UniProtKB-SubCell"/>
</dbReference>
<dbReference type="GO" id="GO:0016020">
    <property type="term" value="C:membrane"/>
    <property type="evidence" value="ECO:0007669"/>
    <property type="project" value="UniProtKB-UniRule"/>
</dbReference>
<dbReference type="GO" id="GO:0019031">
    <property type="term" value="C:viral envelope"/>
    <property type="evidence" value="ECO:0007669"/>
    <property type="project" value="UniProtKB-UniRule"/>
</dbReference>
<dbReference type="GO" id="GO:0055036">
    <property type="term" value="C:virion membrane"/>
    <property type="evidence" value="ECO:0007669"/>
    <property type="project" value="UniProtKB-SubCell"/>
</dbReference>
<dbReference type="GO" id="GO:0039660">
    <property type="term" value="F:structural constituent of virion"/>
    <property type="evidence" value="ECO:0007669"/>
    <property type="project" value="UniProtKB-UniRule"/>
</dbReference>
<dbReference type="CDD" id="cd21564">
    <property type="entry name" value="alphaCoV_M"/>
    <property type="match status" value="1"/>
</dbReference>
<dbReference type="HAMAP" id="MF_04201">
    <property type="entry name" value="ALPHA_CORONA_M"/>
    <property type="match status" value="1"/>
</dbReference>
<dbReference type="InterPro" id="IPR042551">
    <property type="entry name" value="ALPHA_CORONA_M"/>
</dbReference>
<dbReference type="InterPro" id="IPR002574">
    <property type="entry name" value="M_CoV"/>
</dbReference>
<dbReference type="Pfam" id="PF01635">
    <property type="entry name" value="CoV_M"/>
    <property type="match status" value="1"/>
</dbReference>
<dbReference type="PROSITE" id="PS51927">
    <property type="entry name" value="COV_M"/>
    <property type="match status" value="1"/>
</dbReference>
<proteinExistence type="inferred from homology"/>
<sequence>MKILLILACAIACTCGERYCAMKDDTGLSCRNGTASDCESCFNRGDLIWLLANWNFSWSIILIIFITVLQYGRPQFSWFVYGIKMLIMWLLWPIVLALTIFNAYSEYQVSRYVMFGFSIAGAIVTFVLWIMYFVRSIQLYRRTKSWWSFNPETNAILCVSALGRSYVLPLEGVPTGVTLTLLSGNLYAEGFKIAGGMTIDNLPKYVMVALPSRTIVYTLVGKKLKASSATGWAYYVKSKAGDYSTEARTDNLSEQEKLLHMV</sequence>
<organismHost>
    <name type="scientific">Sus scrofa</name>
    <name type="common">Pig</name>
    <dbReference type="NCBI Taxonomy" id="9823"/>
</organismHost>
<evidence type="ECO:0000255" key="1">
    <source>
        <dbReference type="HAMAP-Rule" id="MF_04201"/>
    </source>
</evidence>
<evidence type="ECO:0000255" key="2">
    <source>
        <dbReference type="PROSITE-ProRule" id="PRU01275"/>
    </source>
</evidence>
<feature type="chain" id="PRO_0000037157" description="Membrane protein">
    <location>
        <begin position="1"/>
        <end position="262"/>
    </location>
</feature>
<feature type="topological domain" description="Virion surface" evidence="1">
    <location>
        <begin position="18"/>
        <end position="47"/>
    </location>
</feature>
<feature type="transmembrane region" description="Helical" evidence="1">
    <location>
        <begin position="48"/>
        <end position="68"/>
    </location>
</feature>
<feature type="topological domain" description="Intravirion" evidence="1">
    <location>
        <begin position="69"/>
        <end position="77"/>
    </location>
</feature>
<feature type="transmembrane region" description="Helical" evidence="1">
    <location>
        <begin position="78"/>
        <end position="98"/>
    </location>
</feature>
<feature type="topological domain" description="Virion surface" evidence="1">
    <location>
        <begin position="99"/>
        <end position="112"/>
    </location>
</feature>
<feature type="transmembrane region" description="Helical" evidence="1">
    <location>
        <begin position="113"/>
        <end position="133"/>
    </location>
</feature>
<feature type="topological domain" description="Intravirion" evidence="1">
    <location>
        <begin position="134"/>
        <end position="262"/>
    </location>
</feature>
<feature type="region of interest" description="Interaction with N protein" evidence="1">
    <location>
        <begin position="237"/>
        <end position="252"/>
    </location>
</feature>
<gene>
    <name evidence="1" type="primary">M</name>
</gene>
<keyword id="KW-0325">Glycoprotein</keyword>
<keyword id="KW-1040">Host Golgi apparatus</keyword>
<keyword id="KW-1043">Host membrane</keyword>
<keyword id="KW-0472">Membrane</keyword>
<keyword id="KW-0812">Transmembrane</keyword>
<keyword id="KW-1133">Transmembrane helix</keyword>
<keyword id="KW-0261">Viral envelope protein</keyword>
<keyword id="KW-0468">Viral matrix protein</keyword>
<keyword id="KW-0946">Virion</keyword>